<evidence type="ECO:0000255" key="1">
    <source>
        <dbReference type="HAMAP-Rule" id="MF_00096"/>
    </source>
</evidence>
<comment type="function">
    <text evidence="1">This protein is involved in the repair of mismatches in DNA. It is possible that it carries out the mismatch recognition step. This protein has a weak ATPase activity.</text>
</comment>
<comment type="similarity">
    <text evidence="1">Belongs to the DNA mismatch repair MutS family.</text>
</comment>
<reference key="1">
    <citation type="journal article" date="2007" name="Genome Biol.">
        <title>Comparison of Francisella tularensis genomes reveals evolutionary events associated with the emergence of human pathogenic strains.</title>
        <authorList>
            <person name="Rohmer L."/>
            <person name="Fong C."/>
            <person name="Abmayr S."/>
            <person name="Wasnick M."/>
            <person name="Larson Freeman T.J."/>
            <person name="Radey M."/>
            <person name="Guina T."/>
            <person name="Svensson K."/>
            <person name="Hayden H.S."/>
            <person name="Jacobs M."/>
            <person name="Gallagher L.A."/>
            <person name="Manoil C."/>
            <person name="Ernst R.K."/>
            <person name="Drees B."/>
            <person name="Buckley D."/>
            <person name="Haugen E."/>
            <person name="Bovee D."/>
            <person name="Zhou Y."/>
            <person name="Chang J."/>
            <person name="Levy R."/>
            <person name="Lim R."/>
            <person name="Gillett W."/>
            <person name="Guenthener D."/>
            <person name="Kang A."/>
            <person name="Shaffer S.A."/>
            <person name="Taylor G."/>
            <person name="Chen J."/>
            <person name="Gallis B."/>
            <person name="D'Argenio D.A."/>
            <person name="Forsman M."/>
            <person name="Olson M.V."/>
            <person name="Goodlett D.R."/>
            <person name="Kaul R."/>
            <person name="Miller S.I."/>
            <person name="Brittnacher M.J."/>
        </authorList>
    </citation>
    <scope>NUCLEOTIDE SEQUENCE [LARGE SCALE GENOMIC DNA]</scope>
    <source>
        <strain>U112</strain>
    </source>
</reference>
<sequence>MQDISNHTPMIQQYLKIKSQYQDILLFYRMGDFYELFFDDAKKAAELLDITLTARGKSNGESIPMAGVPYHAAEAYIAKIVKKGLSIAICEQTGDPNTSKGPVERQVTRIITPATVSEEAFLDSNQDSILVSIFEKNNKYYLAYTSYTQGKIYLVKTLTSLNELKNTVLKLSPQEIITNSRELAQQNPFKKPIKALEEWYYSNFEAKKYINDSLDTNIANNILNLYKNDQLTTIGSILSYLTNILKDTPRHITDISYEQEQDTLNIDINSRINLELDNSSKSSLLSIIGKCKTSLGSRLLKRYFSNPTRNLNILATRHNIINSLVENQHFLKIQDVLSYISDIERIISRVALGTVKPKDLVALRDSLEQLPILKKLLSEKNTPEITNINNRIHQLDELVTLLDKAIIENPPATIRDGGVIKEGFDKELDELKSIKDNSYDFLIKFEELQKQKTGISTLKVGYNRVHGYYIELSKQHADKIPTEYIRRQTLKASERYITEELKNFEDKILSSKEKALAREKLIYETLLKKVIEYYKQIQETAASIAEIDVLANFAERAIKLKLSQPKFNNLAKLELKEVRHLAIEHNIDEPFIPNDTLLSKDTNTLQIITGPNMGGKSTYMRQVAQLIFLAYIGSFVPASYADICDIDTIYTRIGASDDISSGRSTFMVEMTETAYILNNASAKSLVIMDEIGRGTSTFDGLALAKACAEKFAQIGAFTLFATHYFELTELAKQYPNVCNIHFEAKEYKDNIYFMHKAVTGAAKKSYGIQVAKLAGISQDVLESAKQNLYNLEKKQHLAESTQIQAQFELEPTTQNPLQQKLDAIDINTITPLEALNILFELKKR</sequence>
<name>MUTS_FRATN</name>
<keyword id="KW-0067">ATP-binding</keyword>
<keyword id="KW-0227">DNA damage</keyword>
<keyword id="KW-0234">DNA repair</keyword>
<keyword id="KW-0238">DNA-binding</keyword>
<keyword id="KW-0547">Nucleotide-binding</keyword>
<accession>A0Q809</accession>
<protein>
    <recommendedName>
        <fullName evidence="1">DNA mismatch repair protein MutS</fullName>
    </recommendedName>
</protein>
<gene>
    <name evidence="1" type="primary">mutS</name>
    <name type="ordered locus">FTN_1509</name>
</gene>
<proteinExistence type="inferred from homology"/>
<organism>
    <name type="scientific">Francisella tularensis subsp. novicida (strain U112)</name>
    <dbReference type="NCBI Taxonomy" id="401614"/>
    <lineage>
        <taxon>Bacteria</taxon>
        <taxon>Pseudomonadati</taxon>
        <taxon>Pseudomonadota</taxon>
        <taxon>Gammaproteobacteria</taxon>
        <taxon>Thiotrichales</taxon>
        <taxon>Francisellaceae</taxon>
        <taxon>Francisella</taxon>
    </lineage>
</organism>
<dbReference type="EMBL" id="CP000439">
    <property type="protein sequence ID" value="ABK90374.1"/>
    <property type="molecule type" value="Genomic_DNA"/>
</dbReference>
<dbReference type="RefSeq" id="WP_004339137.1">
    <property type="nucleotide sequence ID" value="NZ_CP009633.1"/>
</dbReference>
<dbReference type="SMR" id="A0Q809"/>
<dbReference type="KEGG" id="ftn:FTN_1509"/>
<dbReference type="KEGG" id="ftx:AW25_492"/>
<dbReference type="Proteomes" id="UP000000762">
    <property type="component" value="Chromosome"/>
</dbReference>
<dbReference type="GO" id="GO:0005829">
    <property type="term" value="C:cytosol"/>
    <property type="evidence" value="ECO:0007669"/>
    <property type="project" value="TreeGrafter"/>
</dbReference>
<dbReference type="GO" id="GO:0005524">
    <property type="term" value="F:ATP binding"/>
    <property type="evidence" value="ECO:0007669"/>
    <property type="project" value="UniProtKB-UniRule"/>
</dbReference>
<dbReference type="GO" id="GO:0140664">
    <property type="term" value="F:ATP-dependent DNA damage sensor activity"/>
    <property type="evidence" value="ECO:0007669"/>
    <property type="project" value="InterPro"/>
</dbReference>
<dbReference type="GO" id="GO:0003684">
    <property type="term" value="F:damaged DNA binding"/>
    <property type="evidence" value="ECO:0007669"/>
    <property type="project" value="UniProtKB-UniRule"/>
</dbReference>
<dbReference type="GO" id="GO:0030983">
    <property type="term" value="F:mismatched DNA binding"/>
    <property type="evidence" value="ECO:0007669"/>
    <property type="project" value="InterPro"/>
</dbReference>
<dbReference type="GO" id="GO:0006298">
    <property type="term" value="P:mismatch repair"/>
    <property type="evidence" value="ECO:0007669"/>
    <property type="project" value="UniProtKB-UniRule"/>
</dbReference>
<dbReference type="FunFam" id="1.10.1420.10:FF:000002">
    <property type="entry name" value="DNA mismatch repair protein MutS"/>
    <property type="match status" value="1"/>
</dbReference>
<dbReference type="FunFam" id="3.40.1170.10:FF:000001">
    <property type="entry name" value="DNA mismatch repair protein MutS"/>
    <property type="match status" value="1"/>
</dbReference>
<dbReference type="FunFam" id="3.40.50.300:FF:000870">
    <property type="entry name" value="MutS protein homolog 4"/>
    <property type="match status" value="1"/>
</dbReference>
<dbReference type="Gene3D" id="1.10.1420.10">
    <property type="match status" value="2"/>
</dbReference>
<dbReference type="Gene3D" id="3.40.1170.10">
    <property type="entry name" value="DNA repair protein MutS, domain I"/>
    <property type="match status" value="1"/>
</dbReference>
<dbReference type="Gene3D" id="3.30.420.110">
    <property type="entry name" value="MutS, connector domain"/>
    <property type="match status" value="1"/>
</dbReference>
<dbReference type="Gene3D" id="3.40.50.300">
    <property type="entry name" value="P-loop containing nucleotide triphosphate hydrolases"/>
    <property type="match status" value="1"/>
</dbReference>
<dbReference type="HAMAP" id="MF_00096">
    <property type="entry name" value="MutS"/>
    <property type="match status" value="1"/>
</dbReference>
<dbReference type="InterPro" id="IPR005748">
    <property type="entry name" value="DNA_mismatch_repair_MutS"/>
</dbReference>
<dbReference type="InterPro" id="IPR007695">
    <property type="entry name" value="DNA_mismatch_repair_MutS-lik_N"/>
</dbReference>
<dbReference type="InterPro" id="IPR017261">
    <property type="entry name" value="DNA_mismatch_repair_MutS/MSH"/>
</dbReference>
<dbReference type="InterPro" id="IPR000432">
    <property type="entry name" value="DNA_mismatch_repair_MutS_C"/>
</dbReference>
<dbReference type="InterPro" id="IPR007861">
    <property type="entry name" value="DNA_mismatch_repair_MutS_clamp"/>
</dbReference>
<dbReference type="InterPro" id="IPR007696">
    <property type="entry name" value="DNA_mismatch_repair_MutS_core"/>
</dbReference>
<dbReference type="InterPro" id="IPR016151">
    <property type="entry name" value="DNA_mismatch_repair_MutS_N"/>
</dbReference>
<dbReference type="InterPro" id="IPR036187">
    <property type="entry name" value="DNA_mismatch_repair_MutS_sf"/>
</dbReference>
<dbReference type="InterPro" id="IPR007860">
    <property type="entry name" value="DNA_mmatch_repair_MutS_con_dom"/>
</dbReference>
<dbReference type="InterPro" id="IPR045076">
    <property type="entry name" value="MutS"/>
</dbReference>
<dbReference type="InterPro" id="IPR036678">
    <property type="entry name" value="MutS_con_dom_sf"/>
</dbReference>
<dbReference type="InterPro" id="IPR027417">
    <property type="entry name" value="P-loop_NTPase"/>
</dbReference>
<dbReference type="NCBIfam" id="TIGR01070">
    <property type="entry name" value="mutS1"/>
    <property type="match status" value="1"/>
</dbReference>
<dbReference type="NCBIfam" id="NF003810">
    <property type="entry name" value="PRK05399.1"/>
    <property type="match status" value="1"/>
</dbReference>
<dbReference type="PANTHER" id="PTHR11361:SF34">
    <property type="entry name" value="DNA MISMATCH REPAIR PROTEIN MSH1, MITOCHONDRIAL"/>
    <property type="match status" value="1"/>
</dbReference>
<dbReference type="PANTHER" id="PTHR11361">
    <property type="entry name" value="DNA MISMATCH REPAIR PROTEIN MUTS FAMILY MEMBER"/>
    <property type="match status" value="1"/>
</dbReference>
<dbReference type="Pfam" id="PF01624">
    <property type="entry name" value="MutS_I"/>
    <property type="match status" value="1"/>
</dbReference>
<dbReference type="Pfam" id="PF05188">
    <property type="entry name" value="MutS_II"/>
    <property type="match status" value="1"/>
</dbReference>
<dbReference type="Pfam" id="PF05192">
    <property type="entry name" value="MutS_III"/>
    <property type="match status" value="1"/>
</dbReference>
<dbReference type="Pfam" id="PF05190">
    <property type="entry name" value="MutS_IV"/>
    <property type="match status" value="1"/>
</dbReference>
<dbReference type="Pfam" id="PF00488">
    <property type="entry name" value="MutS_V"/>
    <property type="match status" value="1"/>
</dbReference>
<dbReference type="PIRSF" id="PIRSF037677">
    <property type="entry name" value="DNA_mis_repair_Msh6"/>
    <property type="match status" value="1"/>
</dbReference>
<dbReference type="SMART" id="SM00534">
    <property type="entry name" value="MUTSac"/>
    <property type="match status" value="1"/>
</dbReference>
<dbReference type="SMART" id="SM00533">
    <property type="entry name" value="MUTSd"/>
    <property type="match status" value="1"/>
</dbReference>
<dbReference type="SUPFAM" id="SSF55271">
    <property type="entry name" value="DNA repair protein MutS, domain I"/>
    <property type="match status" value="1"/>
</dbReference>
<dbReference type="SUPFAM" id="SSF53150">
    <property type="entry name" value="DNA repair protein MutS, domain II"/>
    <property type="match status" value="1"/>
</dbReference>
<dbReference type="SUPFAM" id="SSF48334">
    <property type="entry name" value="DNA repair protein MutS, domain III"/>
    <property type="match status" value="1"/>
</dbReference>
<dbReference type="SUPFAM" id="SSF52540">
    <property type="entry name" value="P-loop containing nucleoside triphosphate hydrolases"/>
    <property type="match status" value="1"/>
</dbReference>
<dbReference type="PROSITE" id="PS00486">
    <property type="entry name" value="DNA_MISMATCH_REPAIR_2"/>
    <property type="match status" value="1"/>
</dbReference>
<feature type="chain" id="PRO_0000335158" description="DNA mismatch repair protein MutS">
    <location>
        <begin position="1"/>
        <end position="844"/>
    </location>
</feature>
<feature type="binding site" evidence="1">
    <location>
        <begin position="610"/>
        <end position="617"/>
    </location>
    <ligand>
        <name>ATP</name>
        <dbReference type="ChEBI" id="CHEBI:30616"/>
    </ligand>
</feature>